<protein>
    <recommendedName>
        <fullName>Ornithine decarboxylase antizyme 2</fullName>
        <shortName>AZ2</shortName>
        <shortName>ODC-Az 2</shortName>
    </recommendedName>
</protein>
<sequence length="189" mass="21011">MINTQDSSILPLSNCPQLQCCRHIVPGPLWCSDAPHPLSKIPGGRGGGRDPSLSALIYKDEKLTVTQDLPVNDGKPHIVHFQYEVTEVKVSSWDAVLSSQSLFVEIPDGLLADGSKEGLLALLEFAEEKMKVNYVFICFRKGREDRAPLLKTFSFLGFEIVRPGHPCVPSRPDVMFMVYPLDQNLSDED</sequence>
<accession>Q5R680</accession>
<proteinExistence type="evidence at transcript level"/>
<comment type="function">
    <text evidence="2 3">Ornithine decarboxylase (ODC) antizyme protein that negatively regulates ODC activity and intracellular polyamine biosynthesis and uptake in response to increased intracellular polyamine levels. Binds to ODC monomers, inhibiting the assembly of the functional ODC homodimers. Does not target the ODC monomers for degradation, which allows a protein synthesis-independent restoration of ODC activity (By similarity). Involved in the translocation of AZIN2 from ER-Golgi intermediate compartment (ERGIC) to the cytosol (By similarity).</text>
</comment>
<comment type="subunit">
    <text evidence="3 4">Interacts with ODC1 and thereby sterically blocks ODC homodimerization (By similarity). Interacts with AZIN2; this interaction disrupts the interaction between the antizyme and ODC1 (By similarity).</text>
</comment>
<comment type="subcellular location">
    <subcellularLocation>
        <location evidence="1">Nucleus</location>
    </subcellularLocation>
</comment>
<comment type="alternative products">
    <event type="ribosomal frameshifting"/>
    <isoform>
        <id>Q5R680-1</id>
        <name>1</name>
        <sequence type="displayed"/>
    </isoform>
    <text>A ribosomal frameshift occurs between the codons for Ser-32 and Asp-33. An autoregulatory mechanism enables modulation of frameshifting according to the cellular concentration of polyamines.</text>
</comment>
<comment type="similarity">
    <text evidence="5">Belongs to the ODC antizyme family.</text>
</comment>
<feature type="chain" id="PRO_0000250713" description="Ornithine decarboxylase antizyme 2">
    <location>
        <begin position="1"/>
        <end position="189"/>
    </location>
</feature>
<feature type="modified residue" description="Phosphoserine" evidence="2">
    <location>
        <position position="186"/>
    </location>
</feature>
<organism>
    <name type="scientific">Pongo abelii</name>
    <name type="common">Sumatran orangutan</name>
    <name type="synonym">Pongo pygmaeus abelii</name>
    <dbReference type="NCBI Taxonomy" id="9601"/>
    <lineage>
        <taxon>Eukaryota</taxon>
        <taxon>Metazoa</taxon>
        <taxon>Chordata</taxon>
        <taxon>Craniata</taxon>
        <taxon>Vertebrata</taxon>
        <taxon>Euteleostomi</taxon>
        <taxon>Mammalia</taxon>
        <taxon>Eutheria</taxon>
        <taxon>Euarchontoglires</taxon>
        <taxon>Primates</taxon>
        <taxon>Haplorrhini</taxon>
        <taxon>Catarrhini</taxon>
        <taxon>Hominidae</taxon>
        <taxon>Pongo</taxon>
    </lineage>
</organism>
<keyword id="KW-0539">Nucleus</keyword>
<keyword id="KW-0597">Phosphoprotein</keyword>
<keyword id="KW-0620">Polyamine biosynthesis</keyword>
<keyword id="KW-1185">Reference proteome</keyword>
<keyword id="KW-0688">Ribosomal frameshifting</keyword>
<dbReference type="EMBL" id="CR860615">
    <property type="protein sequence ID" value="CAH92736.1"/>
    <property type="molecule type" value="mRNA"/>
</dbReference>
<dbReference type="RefSeq" id="NP_001126596.1">
    <molecule id="Q5R680-1"/>
    <property type="nucleotide sequence ID" value="NM_001133124.1"/>
</dbReference>
<dbReference type="SMR" id="Q5R680"/>
<dbReference type="FunCoup" id="Q5R680">
    <property type="interactions" value="2918"/>
</dbReference>
<dbReference type="STRING" id="9601.ENSPPYP00000007433"/>
<dbReference type="GeneID" id="100173592"/>
<dbReference type="KEGG" id="pon:100173592"/>
<dbReference type="CTD" id="4947"/>
<dbReference type="eggNOG" id="KOG4387">
    <property type="taxonomic scope" value="Eukaryota"/>
</dbReference>
<dbReference type="InParanoid" id="Q5R680"/>
<dbReference type="OrthoDB" id="5959761at2759"/>
<dbReference type="Proteomes" id="UP000001595">
    <property type="component" value="Unplaced"/>
</dbReference>
<dbReference type="GO" id="GO:0005737">
    <property type="term" value="C:cytoplasm"/>
    <property type="evidence" value="ECO:0007669"/>
    <property type="project" value="TreeGrafter"/>
</dbReference>
<dbReference type="GO" id="GO:0005634">
    <property type="term" value="C:nucleus"/>
    <property type="evidence" value="ECO:0007669"/>
    <property type="project" value="UniProtKB-SubCell"/>
</dbReference>
<dbReference type="GO" id="GO:0008073">
    <property type="term" value="F:ornithine decarboxylase inhibitor activity"/>
    <property type="evidence" value="ECO:0000250"/>
    <property type="project" value="UniProtKB"/>
</dbReference>
<dbReference type="GO" id="GO:0006596">
    <property type="term" value="P:polyamine biosynthetic process"/>
    <property type="evidence" value="ECO:0007669"/>
    <property type="project" value="UniProtKB-KW"/>
</dbReference>
<dbReference type="GO" id="GO:0090316">
    <property type="term" value="P:positive regulation of intracellular protein transport"/>
    <property type="evidence" value="ECO:0000250"/>
    <property type="project" value="UniProtKB"/>
</dbReference>
<dbReference type="GO" id="GO:0045732">
    <property type="term" value="P:positive regulation of protein catabolic process"/>
    <property type="evidence" value="ECO:0000250"/>
    <property type="project" value="UniProtKB"/>
</dbReference>
<dbReference type="GO" id="GO:0075523">
    <property type="term" value="P:viral translational frameshifting"/>
    <property type="evidence" value="ECO:0007669"/>
    <property type="project" value="UniProtKB-KW"/>
</dbReference>
<dbReference type="FunFam" id="3.40.630.60:FF:000001">
    <property type="entry name" value="Ornithine decarboxylase antizyme 1"/>
    <property type="match status" value="1"/>
</dbReference>
<dbReference type="Gene3D" id="3.40.630.60">
    <property type="match status" value="1"/>
</dbReference>
<dbReference type="InterPro" id="IPR016181">
    <property type="entry name" value="Acyl_CoA_acyltransferase"/>
</dbReference>
<dbReference type="InterPro" id="IPR002993">
    <property type="entry name" value="ODC_AZ"/>
</dbReference>
<dbReference type="InterPro" id="IPR038581">
    <property type="entry name" value="ODC_AZ_sf"/>
</dbReference>
<dbReference type="PANTHER" id="PTHR10279">
    <property type="entry name" value="ORNITHINE DECARBOXYLASE ANTIZYME"/>
    <property type="match status" value="1"/>
</dbReference>
<dbReference type="PANTHER" id="PTHR10279:SF6">
    <property type="entry name" value="ORNITHINE DECARBOXYLASE ANTIZYME 2"/>
    <property type="match status" value="1"/>
</dbReference>
<dbReference type="Pfam" id="PF02100">
    <property type="entry name" value="ODC_AZ"/>
    <property type="match status" value="1"/>
</dbReference>
<dbReference type="SUPFAM" id="SSF55729">
    <property type="entry name" value="Acyl-CoA N-acyltransferases (Nat)"/>
    <property type="match status" value="1"/>
</dbReference>
<dbReference type="PROSITE" id="PS01337">
    <property type="entry name" value="ODC_AZ"/>
    <property type="match status" value="1"/>
</dbReference>
<evidence type="ECO:0000250" key="1"/>
<evidence type="ECO:0000250" key="2">
    <source>
        <dbReference type="UniProtKB" id="O08608"/>
    </source>
</evidence>
<evidence type="ECO:0000250" key="3">
    <source>
        <dbReference type="UniProtKB" id="O95190"/>
    </source>
</evidence>
<evidence type="ECO:0000250" key="4">
    <source>
        <dbReference type="UniProtKB" id="P54368"/>
    </source>
</evidence>
<evidence type="ECO:0000305" key="5"/>
<gene>
    <name type="primary">OAZ2</name>
</gene>
<reference key="1">
    <citation type="submission" date="2004-11" db="EMBL/GenBank/DDBJ databases">
        <authorList>
            <consortium name="The German cDNA consortium"/>
        </authorList>
    </citation>
    <scope>NUCLEOTIDE SEQUENCE [LARGE SCALE MRNA]</scope>
    <source>
        <tissue>Brain cortex</tissue>
    </source>
</reference>
<name>OAZ2_PONAB</name>